<name>YBEY_FUSNN</name>
<reference key="1">
    <citation type="journal article" date="2002" name="J. Bacteriol.">
        <title>Genome sequence and analysis of the oral bacterium Fusobacterium nucleatum strain ATCC 25586.</title>
        <authorList>
            <person name="Kapatral V."/>
            <person name="Anderson I."/>
            <person name="Ivanova N."/>
            <person name="Reznik G."/>
            <person name="Los T."/>
            <person name="Lykidis A."/>
            <person name="Bhattacharyya A."/>
            <person name="Bartman A."/>
            <person name="Gardner W."/>
            <person name="Grechkin G."/>
            <person name="Zhu L."/>
            <person name="Vasieva O."/>
            <person name="Chu L."/>
            <person name="Kogan Y."/>
            <person name="Chaga O."/>
            <person name="Goltsman E."/>
            <person name="Bernal A."/>
            <person name="Larsen N."/>
            <person name="D'Souza M."/>
            <person name="Walunas T."/>
            <person name="Pusch G."/>
            <person name="Haselkorn R."/>
            <person name="Fonstein M."/>
            <person name="Kyrpides N.C."/>
            <person name="Overbeek R."/>
        </authorList>
    </citation>
    <scope>NUCLEOTIDE SEQUENCE [LARGE SCALE GENOMIC DNA]</scope>
    <source>
        <strain>ATCC 25586 / DSM 15643 / BCRC 10681 / CIP 101130 / JCM 8532 / KCTC 2640 / LMG 13131 / VPI 4355</strain>
    </source>
</reference>
<dbReference type="EC" id="3.1.-.-" evidence="1"/>
<dbReference type="EMBL" id="AE009951">
    <property type="protein sequence ID" value="AAL94942.1"/>
    <property type="molecule type" value="Genomic_DNA"/>
</dbReference>
<dbReference type="RefSeq" id="NP_603643.1">
    <property type="nucleotide sequence ID" value="NC_003454.1"/>
</dbReference>
<dbReference type="RefSeq" id="WP_011016624.1">
    <property type="nucleotide sequence ID" value="NZ_CP028101.1"/>
</dbReference>
<dbReference type="SMR" id="Q8R5X4"/>
<dbReference type="FunCoup" id="Q8R5X4">
    <property type="interactions" value="310"/>
</dbReference>
<dbReference type="STRING" id="190304.FN0746"/>
<dbReference type="PaxDb" id="190304-FN0746"/>
<dbReference type="EnsemblBacteria" id="AAL94942">
    <property type="protein sequence ID" value="AAL94942"/>
    <property type="gene ID" value="FN0746"/>
</dbReference>
<dbReference type="GeneID" id="79783738"/>
<dbReference type="KEGG" id="fnu:FN0746"/>
<dbReference type="PATRIC" id="fig|190304.8.peg.1309"/>
<dbReference type="eggNOG" id="COG0319">
    <property type="taxonomic scope" value="Bacteria"/>
</dbReference>
<dbReference type="HOGENOM" id="CLU_106710_3_0_0"/>
<dbReference type="InParanoid" id="Q8R5X4"/>
<dbReference type="BioCyc" id="FNUC190304:G1FZS-1332-MONOMER"/>
<dbReference type="Proteomes" id="UP000002521">
    <property type="component" value="Chromosome"/>
</dbReference>
<dbReference type="GO" id="GO:0005737">
    <property type="term" value="C:cytoplasm"/>
    <property type="evidence" value="ECO:0007669"/>
    <property type="project" value="UniProtKB-SubCell"/>
</dbReference>
<dbReference type="GO" id="GO:0004222">
    <property type="term" value="F:metalloendopeptidase activity"/>
    <property type="evidence" value="ECO:0007669"/>
    <property type="project" value="InterPro"/>
</dbReference>
<dbReference type="GO" id="GO:0004521">
    <property type="term" value="F:RNA endonuclease activity"/>
    <property type="evidence" value="ECO:0007669"/>
    <property type="project" value="UniProtKB-UniRule"/>
</dbReference>
<dbReference type="GO" id="GO:0008270">
    <property type="term" value="F:zinc ion binding"/>
    <property type="evidence" value="ECO:0007669"/>
    <property type="project" value="UniProtKB-UniRule"/>
</dbReference>
<dbReference type="GO" id="GO:0006364">
    <property type="term" value="P:rRNA processing"/>
    <property type="evidence" value="ECO:0007669"/>
    <property type="project" value="UniProtKB-UniRule"/>
</dbReference>
<dbReference type="Gene3D" id="3.40.390.30">
    <property type="entry name" value="Metalloproteases ('zincins'), catalytic domain"/>
    <property type="match status" value="1"/>
</dbReference>
<dbReference type="HAMAP" id="MF_00009">
    <property type="entry name" value="Endoribonucl_YbeY"/>
    <property type="match status" value="1"/>
</dbReference>
<dbReference type="InterPro" id="IPR023091">
    <property type="entry name" value="MetalPrtase_cat_dom_sf_prd"/>
</dbReference>
<dbReference type="InterPro" id="IPR002036">
    <property type="entry name" value="YbeY"/>
</dbReference>
<dbReference type="InterPro" id="IPR020549">
    <property type="entry name" value="YbeY_CS"/>
</dbReference>
<dbReference type="NCBIfam" id="TIGR00043">
    <property type="entry name" value="rRNA maturation RNase YbeY"/>
    <property type="match status" value="1"/>
</dbReference>
<dbReference type="PANTHER" id="PTHR46986">
    <property type="entry name" value="ENDORIBONUCLEASE YBEY, CHLOROPLASTIC"/>
    <property type="match status" value="1"/>
</dbReference>
<dbReference type="PANTHER" id="PTHR46986:SF1">
    <property type="entry name" value="ENDORIBONUCLEASE YBEY, CHLOROPLASTIC"/>
    <property type="match status" value="1"/>
</dbReference>
<dbReference type="Pfam" id="PF02130">
    <property type="entry name" value="YbeY"/>
    <property type="match status" value="1"/>
</dbReference>
<dbReference type="SUPFAM" id="SSF55486">
    <property type="entry name" value="Metalloproteases ('zincins'), catalytic domain"/>
    <property type="match status" value="1"/>
</dbReference>
<dbReference type="PROSITE" id="PS01306">
    <property type="entry name" value="UPF0054"/>
    <property type="match status" value="1"/>
</dbReference>
<proteinExistence type="inferred from homology"/>
<gene>
    <name evidence="1" type="primary">ybeY</name>
    <name type="ordered locus">FN0746</name>
</gene>
<comment type="function">
    <text evidence="1">Single strand-specific metallo-endoribonuclease involved in late-stage 70S ribosome quality control and in maturation of the 3' terminus of the 16S rRNA.</text>
</comment>
<comment type="cofactor">
    <cofactor evidence="1">
        <name>Zn(2+)</name>
        <dbReference type="ChEBI" id="CHEBI:29105"/>
    </cofactor>
    <text evidence="1">Binds 1 zinc ion.</text>
</comment>
<comment type="subcellular location">
    <subcellularLocation>
        <location evidence="1">Cytoplasm</location>
    </subcellularLocation>
</comment>
<comment type="similarity">
    <text evidence="1">Belongs to the endoribonuclease YbeY family.</text>
</comment>
<accession>Q8R5X4</accession>
<feature type="chain" id="PRO_0000102457" description="Endoribonuclease YbeY">
    <location>
        <begin position="1"/>
        <end position="162"/>
    </location>
</feature>
<feature type="binding site" evidence="1">
    <location>
        <position position="126"/>
    </location>
    <ligand>
        <name>Zn(2+)</name>
        <dbReference type="ChEBI" id="CHEBI:29105"/>
        <note>catalytic</note>
    </ligand>
</feature>
<feature type="binding site" evidence="1">
    <location>
        <position position="130"/>
    </location>
    <ligand>
        <name>Zn(2+)</name>
        <dbReference type="ChEBI" id="CHEBI:29105"/>
        <note>catalytic</note>
    </ligand>
</feature>
<feature type="binding site" evidence="1">
    <location>
        <position position="136"/>
    </location>
    <ligand>
        <name>Zn(2+)</name>
        <dbReference type="ChEBI" id="CHEBI:29105"/>
        <note>catalytic</note>
    </ligand>
</feature>
<evidence type="ECO:0000255" key="1">
    <source>
        <dbReference type="HAMAP-Rule" id="MF_00009"/>
    </source>
</evidence>
<protein>
    <recommendedName>
        <fullName evidence="1">Endoribonuclease YbeY</fullName>
        <ecNumber evidence="1">3.1.-.-</ecNumber>
    </recommendedName>
</protein>
<sequence length="162" mass="19334">MELIVDFSSDLQTEKYNMFIDTLYENNHLENYIKKVLNLEKIESDRPLYLSLLLTDNENIQVINREYRDKDAPTDVISFAYHETEDFNIGSYDTLGDIIISLERVEEQASEYNHSFEREFYYVLTHGILHILGYDHIEEEDKKLMREREEAILSSFGYTRDK</sequence>
<organism>
    <name type="scientific">Fusobacterium nucleatum subsp. nucleatum (strain ATCC 25586 / DSM 15643 / BCRC 10681 / CIP 101130 / JCM 8532 / KCTC 2640 / LMG 13131 / VPI 4355)</name>
    <dbReference type="NCBI Taxonomy" id="190304"/>
    <lineage>
        <taxon>Bacteria</taxon>
        <taxon>Fusobacteriati</taxon>
        <taxon>Fusobacteriota</taxon>
        <taxon>Fusobacteriia</taxon>
        <taxon>Fusobacteriales</taxon>
        <taxon>Fusobacteriaceae</taxon>
        <taxon>Fusobacterium</taxon>
    </lineage>
</organism>
<keyword id="KW-0963">Cytoplasm</keyword>
<keyword id="KW-0255">Endonuclease</keyword>
<keyword id="KW-0378">Hydrolase</keyword>
<keyword id="KW-0479">Metal-binding</keyword>
<keyword id="KW-0540">Nuclease</keyword>
<keyword id="KW-1185">Reference proteome</keyword>
<keyword id="KW-0690">Ribosome biogenesis</keyword>
<keyword id="KW-0698">rRNA processing</keyword>
<keyword id="KW-0862">Zinc</keyword>